<feature type="chain" id="PRO_0000195170" description="Galactosylgalactosylxylosylprotein 3-beta-glucuronosyltransferase 1">
    <location>
        <begin position="1"/>
        <end position="334"/>
    </location>
</feature>
<feature type="topological domain" description="Cytoplasmic" evidence="3">
    <location>
        <begin position="1"/>
        <end position="6"/>
    </location>
</feature>
<feature type="transmembrane region" description="Helical; Signal-anchor for type II membrane protein" evidence="3">
    <location>
        <begin position="7"/>
        <end position="27"/>
    </location>
</feature>
<feature type="topological domain" description="Lumenal" evidence="3">
    <location>
        <begin position="28"/>
        <end position="334"/>
    </location>
</feature>
<feature type="region of interest" description="Essential for transport from endoplasmic reticulum to Golgi apparatus and interaction with SAR1A" evidence="4">
    <location>
        <begin position="3"/>
        <end position="5"/>
    </location>
</feature>
<feature type="region of interest" description="Interaction with galactose moiety of substrate glycoprotein" evidence="1">
    <location>
        <begin position="245"/>
        <end position="254"/>
    </location>
</feature>
<feature type="active site" description="Proton donor/acceptor" evidence="1">
    <location>
        <position position="284"/>
    </location>
</feature>
<feature type="binding site" evidence="1">
    <location>
        <begin position="91"/>
        <end position="93"/>
    </location>
    <ligand>
        <name>UDP-alpha-D-glucuronate</name>
        <dbReference type="ChEBI" id="CHEBI:58052"/>
    </ligand>
</feature>
<feature type="binding site" evidence="1">
    <location>
        <position position="122"/>
    </location>
    <ligand>
        <name>UDP-alpha-D-glucuronate</name>
        <dbReference type="ChEBI" id="CHEBI:58052"/>
    </ligand>
</feature>
<feature type="binding site" evidence="1">
    <location>
        <position position="165"/>
    </location>
    <ligand>
        <name>UDP-alpha-D-glucuronate</name>
        <dbReference type="ChEBI" id="CHEBI:58052"/>
    </ligand>
</feature>
<feature type="binding site" evidence="1">
    <location>
        <position position="170"/>
    </location>
    <ligand>
        <name>UDP-alpha-D-glucuronate</name>
        <dbReference type="ChEBI" id="CHEBI:58052"/>
    </ligand>
</feature>
<feature type="binding site" evidence="1">
    <location>
        <begin position="195"/>
        <end position="197"/>
    </location>
    <ligand>
        <name>UDP-alpha-D-glucuronate</name>
        <dbReference type="ChEBI" id="CHEBI:58052"/>
    </ligand>
</feature>
<feature type="binding site" evidence="1">
    <location>
        <position position="197"/>
    </location>
    <ligand>
        <name>Mn(2+)</name>
        <dbReference type="ChEBI" id="CHEBI:29035"/>
    </ligand>
</feature>
<feature type="binding site" evidence="1">
    <location>
        <begin position="311"/>
        <end position="313"/>
    </location>
    <ligand>
        <name>UDP-alpha-D-glucuronate</name>
        <dbReference type="ChEBI" id="CHEBI:58052"/>
    </ligand>
</feature>
<feature type="site" description="Interaction with galactose moiety of substrate glycoprotein" evidence="1">
    <location>
        <position position="228"/>
    </location>
</feature>
<feature type="site" description="Interaction with galactose moiety of substrate glycoprotein" evidence="1">
    <location>
        <position position="321"/>
    </location>
</feature>
<feature type="modified residue" description="Phosphothreonine" evidence="9">
    <location>
        <position position="103"/>
    </location>
</feature>
<feature type="modified residue" description="Phosphothreonine" evidence="9">
    <location>
        <position position="108"/>
    </location>
</feature>
<feature type="glycosylation site" description="N-linked (GlcNAc...) asparagine" evidence="3">
    <location>
        <position position="140"/>
    </location>
</feature>
<feature type="glycosylation site" description="N-linked (GlcNAc...) asparagine" evidence="3">
    <location>
        <position position="184"/>
    </location>
</feature>
<feature type="glycosylation site" description="N-linked (GlcNAc...) asparagine" evidence="3">
    <location>
        <position position="303"/>
    </location>
</feature>
<feature type="splice variant" id="VSP_058540" description="In isoform 2.">
    <original>M</original>
    <variation>MGNEELWAQPALEM</variation>
    <location>
        <position position="1"/>
    </location>
</feature>
<feature type="mutagenesis site" description="Significantly disrupts Golgi apparatus localization. Decreases galactosylgalactosylxylosylprotein 3-beta-glucuronosyltransferase activity. Impairs secretion and interaction with SAR1A." evidence="4">
    <original>KRR</original>
    <variation>AAA</variation>
    <location>
        <begin position="3"/>
        <end position="5"/>
    </location>
</feature>
<reference key="1">
    <citation type="journal article" date="1997" name="Proc. Natl. Acad. Sci. U.S.A.">
        <title>Cloning and functional expression of a novel glucuronyltransferase involved in the biosynthesis of the carbohydrate epitope HNK-1.</title>
        <authorList>
            <person name="Terayama K."/>
            <person name="Oka S."/>
            <person name="Seiki T."/>
            <person name="Miki Y."/>
            <person name="Nakamura A."/>
            <person name="Kozutsumi Y."/>
            <person name="Takio K."/>
            <person name="Kawasaki T."/>
        </authorList>
    </citation>
    <scope>NUCLEOTIDE SEQUENCE [MRNA] (ISOFORM 1)</scope>
    <scope>PROTEIN SEQUENCE OF 62-95; 185-209; 214-231; 238-262; 269-274; 280-289 AND 307-333</scope>
    <source>
        <tissue>Brain</tissue>
    </source>
</reference>
<reference key="2">
    <citation type="journal article" date="2009" name="J. Biol. Chem.">
        <title>Distinct transport and intracellular activities of two GlcAT-P isoforms.</title>
        <authorList>
            <person name="Kizuka Y."/>
            <person name="Tonoyama Y."/>
            <person name="Oka S."/>
        </authorList>
    </citation>
    <scope>NUCLEOTIDE SEQUENCE [MRNA] (ISOFORMS 1 AND 2)</scope>
    <scope>FUNCTION</scope>
    <scope>SUBCELLULAR LOCATION</scope>
    <scope>CATALYTIC ACTIVITY</scope>
    <scope>ALTERNATIVE SPLICING (ISOFORMS 1 AND 2)</scope>
    <scope>PROTEOLYTIC CLEAVAGE</scope>
    <scope>MUTAGENESIS OF 3-LYS--ARG-5</scope>
    <scope>REGION</scope>
    <scope>INTERACTION WITH SAR1A</scope>
</reference>
<reference key="3">
    <citation type="journal article" date="2004" name="Nature">
        <title>Genome sequence of the Brown Norway rat yields insights into mammalian evolution.</title>
        <authorList>
            <person name="Gibbs R.A."/>
            <person name="Weinstock G.M."/>
            <person name="Metzker M.L."/>
            <person name="Muzny D.M."/>
            <person name="Sodergren E.J."/>
            <person name="Scherer S."/>
            <person name="Scott G."/>
            <person name="Steffen D."/>
            <person name="Worley K.C."/>
            <person name="Burch P.E."/>
            <person name="Okwuonu G."/>
            <person name="Hines S."/>
            <person name="Lewis L."/>
            <person name="Deramo C."/>
            <person name="Delgado O."/>
            <person name="Dugan-Rocha S."/>
            <person name="Miner G."/>
            <person name="Morgan M."/>
            <person name="Hawes A."/>
            <person name="Gill R."/>
            <person name="Holt R.A."/>
            <person name="Adams M.D."/>
            <person name="Amanatides P.G."/>
            <person name="Baden-Tillson H."/>
            <person name="Barnstead M."/>
            <person name="Chin S."/>
            <person name="Evans C.A."/>
            <person name="Ferriera S."/>
            <person name="Fosler C."/>
            <person name="Glodek A."/>
            <person name="Gu Z."/>
            <person name="Jennings D."/>
            <person name="Kraft C.L."/>
            <person name="Nguyen T."/>
            <person name="Pfannkoch C.M."/>
            <person name="Sitter C."/>
            <person name="Sutton G.G."/>
            <person name="Venter J.C."/>
            <person name="Woodage T."/>
            <person name="Smith D."/>
            <person name="Lee H.-M."/>
            <person name="Gustafson E."/>
            <person name="Cahill P."/>
            <person name="Kana A."/>
            <person name="Doucette-Stamm L."/>
            <person name="Weinstock K."/>
            <person name="Fechtel K."/>
            <person name="Weiss R.B."/>
            <person name="Dunn D.M."/>
            <person name="Green E.D."/>
            <person name="Blakesley R.W."/>
            <person name="Bouffard G.G."/>
            <person name="De Jong P.J."/>
            <person name="Osoegawa K."/>
            <person name="Zhu B."/>
            <person name="Marra M."/>
            <person name="Schein J."/>
            <person name="Bosdet I."/>
            <person name="Fjell C."/>
            <person name="Jones S."/>
            <person name="Krzywinski M."/>
            <person name="Mathewson C."/>
            <person name="Siddiqui A."/>
            <person name="Wye N."/>
            <person name="McPherson J."/>
            <person name="Zhao S."/>
            <person name="Fraser C.M."/>
            <person name="Shetty J."/>
            <person name="Shatsman S."/>
            <person name="Geer K."/>
            <person name="Chen Y."/>
            <person name="Abramzon S."/>
            <person name="Nierman W.C."/>
            <person name="Havlak P.H."/>
            <person name="Chen R."/>
            <person name="Durbin K.J."/>
            <person name="Egan A."/>
            <person name="Ren Y."/>
            <person name="Song X.-Z."/>
            <person name="Li B."/>
            <person name="Liu Y."/>
            <person name="Qin X."/>
            <person name="Cawley S."/>
            <person name="Cooney A.J."/>
            <person name="D'Souza L.M."/>
            <person name="Martin K."/>
            <person name="Wu J.Q."/>
            <person name="Gonzalez-Garay M.L."/>
            <person name="Jackson A.R."/>
            <person name="Kalafus K.J."/>
            <person name="McLeod M.P."/>
            <person name="Milosavljevic A."/>
            <person name="Virk D."/>
            <person name="Volkov A."/>
            <person name="Wheeler D.A."/>
            <person name="Zhang Z."/>
            <person name="Bailey J.A."/>
            <person name="Eichler E.E."/>
            <person name="Tuzun E."/>
            <person name="Birney E."/>
            <person name="Mongin E."/>
            <person name="Ureta-Vidal A."/>
            <person name="Woodwark C."/>
            <person name="Zdobnov E."/>
            <person name="Bork P."/>
            <person name="Suyama M."/>
            <person name="Torrents D."/>
            <person name="Alexandersson M."/>
            <person name="Trask B.J."/>
            <person name="Young J.M."/>
            <person name="Huang H."/>
            <person name="Wang H."/>
            <person name="Xing H."/>
            <person name="Daniels S."/>
            <person name="Gietzen D."/>
            <person name="Schmidt J."/>
            <person name="Stevens K."/>
            <person name="Vitt U."/>
            <person name="Wingrove J."/>
            <person name="Camara F."/>
            <person name="Mar Alba M."/>
            <person name="Abril J.F."/>
            <person name="Guigo R."/>
            <person name="Smit A."/>
            <person name="Dubchak I."/>
            <person name="Rubin E.M."/>
            <person name="Couronne O."/>
            <person name="Poliakov A."/>
            <person name="Huebner N."/>
            <person name="Ganten D."/>
            <person name="Goesele C."/>
            <person name="Hummel O."/>
            <person name="Kreitler T."/>
            <person name="Lee Y.-A."/>
            <person name="Monti J."/>
            <person name="Schulz H."/>
            <person name="Zimdahl H."/>
            <person name="Himmelbauer H."/>
            <person name="Lehrach H."/>
            <person name="Jacob H.J."/>
            <person name="Bromberg S."/>
            <person name="Gullings-Handley J."/>
            <person name="Jensen-Seaman M.I."/>
            <person name="Kwitek A.E."/>
            <person name="Lazar J."/>
            <person name="Pasko D."/>
            <person name="Tonellato P.J."/>
            <person name="Twigger S."/>
            <person name="Ponting C.P."/>
            <person name="Duarte J.M."/>
            <person name="Rice S."/>
            <person name="Goodstadt L."/>
            <person name="Beatson S.A."/>
            <person name="Emes R.D."/>
            <person name="Winter E.E."/>
            <person name="Webber C."/>
            <person name="Brandt P."/>
            <person name="Nyakatura G."/>
            <person name="Adetobi M."/>
            <person name="Chiaromonte F."/>
            <person name="Elnitski L."/>
            <person name="Eswara P."/>
            <person name="Hardison R.C."/>
            <person name="Hou M."/>
            <person name="Kolbe D."/>
            <person name="Makova K."/>
            <person name="Miller W."/>
            <person name="Nekrutenko A."/>
            <person name="Riemer C."/>
            <person name="Schwartz S."/>
            <person name="Taylor J."/>
            <person name="Yang S."/>
            <person name="Zhang Y."/>
            <person name="Lindpaintner K."/>
            <person name="Andrews T.D."/>
            <person name="Caccamo M."/>
            <person name="Clamp M."/>
            <person name="Clarke L."/>
            <person name="Curwen V."/>
            <person name="Durbin R.M."/>
            <person name="Eyras E."/>
            <person name="Searle S.M."/>
            <person name="Cooper G.M."/>
            <person name="Batzoglou S."/>
            <person name="Brudno M."/>
            <person name="Sidow A."/>
            <person name="Stone E.A."/>
            <person name="Payseur B.A."/>
            <person name="Bourque G."/>
            <person name="Lopez-Otin C."/>
            <person name="Puente X.S."/>
            <person name="Chakrabarti K."/>
            <person name="Chatterji S."/>
            <person name="Dewey C."/>
            <person name="Pachter L."/>
            <person name="Bray N."/>
            <person name="Yap V.B."/>
            <person name="Caspi A."/>
            <person name="Tesler G."/>
            <person name="Pevzner P.A."/>
            <person name="Haussler D."/>
            <person name="Roskin K.M."/>
            <person name="Baertsch R."/>
            <person name="Clawson H."/>
            <person name="Furey T.S."/>
            <person name="Hinrichs A.S."/>
            <person name="Karolchik D."/>
            <person name="Kent W.J."/>
            <person name="Rosenbloom K.R."/>
            <person name="Trumbower H."/>
            <person name="Weirauch M."/>
            <person name="Cooper D.N."/>
            <person name="Stenson P.D."/>
            <person name="Ma B."/>
            <person name="Brent M."/>
            <person name="Arumugam M."/>
            <person name="Shteynberg D."/>
            <person name="Copley R.R."/>
            <person name="Taylor M.S."/>
            <person name="Riethman H."/>
            <person name="Mudunuri U."/>
            <person name="Peterson J."/>
            <person name="Guyer M."/>
            <person name="Felsenfeld A."/>
            <person name="Old S."/>
            <person name="Mockrin S."/>
            <person name="Collins F.S."/>
        </authorList>
    </citation>
    <scope>NUCLEOTIDE SEQUENCE [LARGE SCALE GENOMIC DNA]</scope>
    <source>
        <strain>Brown Norway</strain>
    </source>
</reference>
<reference key="4">
    <citation type="submission" date="2005-09" db="EMBL/GenBank/DDBJ databases">
        <authorList>
            <person name="Mural R.J."/>
            <person name="Adams M.D."/>
            <person name="Myers E.W."/>
            <person name="Smith H.O."/>
            <person name="Venter J.C."/>
        </authorList>
    </citation>
    <scope>NUCLEOTIDE SEQUENCE [LARGE SCALE GENOMIC DNA]</scope>
    <source>
        <strain>Brown Norway</strain>
    </source>
</reference>
<reference key="5">
    <citation type="journal article" date="1998" name="J. Biol. Chem.">
        <title>Purification and characterization of a glucuronyltransferase involved in the biosynthesis of the HNK-1 epitope on glycoproteins from rat brain.</title>
        <authorList>
            <person name="Terayama K."/>
            <person name="Seiki T."/>
            <person name="Nakamura A."/>
            <person name="Matsumori K."/>
            <person name="Ohta S."/>
            <person name="Oka S."/>
            <person name="Sugita M."/>
            <person name="Kawasaki T."/>
        </authorList>
    </citation>
    <scope>FUNCTION</scope>
    <scope>CATALYTIC ACTIVITY</scope>
    <scope>COFACTOR</scope>
    <scope>SUBUNIT</scope>
    <scope>CHARACTERIZATION</scope>
    <source>
        <tissue>Fetal brain</tissue>
    </source>
</reference>
<reference key="6">
    <citation type="journal article" date="2006" name="Proc. Natl. Acad. Sci. U.S.A.">
        <title>Quantitative phosphoproteomics of vasopressin-sensitive renal cells: regulation of aquaporin-2 phosphorylation at two sites.</title>
        <authorList>
            <person name="Hoffert J.D."/>
            <person name="Pisitkun T."/>
            <person name="Wang G."/>
            <person name="Shen R.-F."/>
            <person name="Knepper M.A."/>
        </authorList>
    </citation>
    <scope>PHOSPHORYLATION [LARGE SCALE ANALYSIS] AT THR-103 AND THR-108</scope>
    <scope>IDENTIFICATION BY MASS SPECTROMETRY [LARGE SCALE ANALYSIS]</scope>
</reference>
<evidence type="ECO:0000250" key="1"/>
<evidence type="ECO:0000250" key="2">
    <source>
        <dbReference type="UniProtKB" id="Q9P2W7"/>
    </source>
</evidence>
<evidence type="ECO:0000255" key="3"/>
<evidence type="ECO:0000269" key="4">
    <source>
    </source>
</evidence>
<evidence type="ECO:0000269" key="5">
    <source>
    </source>
</evidence>
<evidence type="ECO:0000303" key="6">
    <source>
    </source>
</evidence>
<evidence type="ECO:0000305" key="7"/>
<evidence type="ECO:0000312" key="8">
    <source>
        <dbReference type="RGD" id="70880"/>
    </source>
</evidence>
<evidence type="ECO:0007744" key="9">
    <source>
    </source>
</evidence>
<gene>
    <name evidence="8" type="primary">B3gat1</name>
</gene>
<comment type="function">
    <text evidence="4 5">Involved in the biosynthesis of L2/HNK-1 carbohydrate epitope on glycoproteins. Can also play a role in glycosaminoglycan biosynthesis. Substrates include asialo-orosomucoid (ASOR), asialo-fetuin, and asialo-neural cell adhesion molecule. Requires sphingomyelin for activity: stearoyl-sphingomyelin was the most effective, followed by palmitoyl-sphingomyelin and lignoceroyl-sphingomyelin. Activity was demonstrated only for sphingomyelin with a saturated fatty acid and not for that with an unsaturated fatty acid, regardless of the length of the acyl group.</text>
</comment>
<comment type="catalytic activity">
    <reaction evidence="4 5">
        <text>3-O-(beta-D-galactosyl-(1-&gt;3)-beta-D-galactosyl-(1-&gt;4)-beta-D-xylosyl)-L-seryl-[protein] + UDP-alpha-D-glucuronate = 3-O-(beta-D-GlcA-(1-&gt;3)-beta-D-Gal-(1-&gt;3)-beta-D-Gal-(1-&gt;4)-beta-D-Xyl)-L-seryl-[protein] + UDP + H(+)</text>
        <dbReference type="Rhea" id="RHEA:24168"/>
        <dbReference type="Rhea" id="RHEA-COMP:12571"/>
        <dbReference type="Rhea" id="RHEA-COMP:12573"/>
        <dbReference type="ChEBI" id="CHEBI:15378"/>
        <dbReference type="ChEBI" id="CHEBI:58052"/>
        <dbReference type="ChEBI" id="CHEBI:58223"/>
        <dbReference type="ChEBI" id="CHEBI:132090"/>
        <dbReference type="ChEBI" id="CHEBI:132093"/>
        <dbReference type="EC" id="2.4.1.135"/>
    </reaction>
</comment>
<comment type="cofactor">
    <cofactor evidence="5">
        <name>Mn(2+)</name>
        <dbReference type="ChEBI" id="CHEBI:29035"/>
    </cofactor>
</comment>
<comment type="pathway">
    <text>Protein modification; protein glycosylation.</text>
</comment>
<comment type="subunit">
    <text evidence="4 5">Homodimer (PubMed:9804790). Interacts with SAR1A (PubMed:19181664).</text>
</comment>
<comment type="subcellular location">
    <molecule>Isoform 1</molecule>
    <subcellularLocation>
        <location evidence="4">Golgi apparatus membrane</location>
        <topology>Single-pass type II membrane protein</topology>
    </subcellularLocation>
    <subcellularLocation>
        <location evidence="4">Secreted</location>
    </subcellularLocation>
</comment>
<comment type="subcellular location">
    <molecule>Isoform 2</molecule>
    <subcellularLocation>
        <location evidence="4">Golgi apparatus membrane</location>
        <topology>Single-pass type II membrane protein</topology>
    </subcellularLocation>
    <subcellularLocation>
        <location evidence="4">Endoplasmic reticulum membrane</location>
    </subcellularLocation>
    <subcellularLocation>
        <location evidence="4">Secreted</location>
    </subcellularLocation>
</comment>
<comment type="alternative products">
    <event type="alternative splicing"/>
    <isoform>
        <id>O35789-1</id>
        <name>1</name>
        <name evidence="6">sGlcAT-P</name>
        <sequence type="displayed"/>
    </isoform>
    <isoform>
        <id>O35789-2</id>
        <name>2</name>
        <name evidence="6">lGlcAT-P</name>
        <sequence type="described" ref="VSP_058540"/>
    </isoform>
</comment>
<comment type="tissue specificity">
    <text>Brain. Greater expression found in the cerebral cortex than the cerebellum.</text>
</comment>
<comment type="PTM">
    <text evidence="4">The soluble form derives from the membrane form by proteolytic processing.</text>
</comment>
<comment type="similarity">
    <text evidence="7">Belongs to the glycosyltransferase 43 family.</text>
</comment>
<comment type="sequence caution" evidence="7">
    <conflict type="erroneous initiation">
        <sequence resource="EMBL-CDS" id="BAA20551"/>
    </conflict>
</comment>
<protein>
    <recommendedName>
        <fullName evidence="2">Galactosylgalactosylxylosylprotein 3-beta-glucuronosyltransferase 1</fullName>
        <ecNumber evidence="4">2.4.1.135</ecNumber>
    </recommendedName>
    <alternativeName>
        <fullName>Beta-1,3-glucuronyltransferase 1</fullName>
    </alternativeName>
    <alternativeName>
        <fullName>Glucuronosyltransferase P</fullName>
        <shortName evidence="6">GlcAT-P</shortName>
    </alternativeName>
    <alternativeName>
        <fullName>UDP-GlcUA:glycoprotein beta-1,3-glucuronyltransferase</fullName>
        <shortName>GlcUAT-P</shortName>
    </alternativeName>
</protein>
<organism>
    <name type="scientific">Rattus norvegicus</name>
    <name type="common">Rat</name>
    <dbReference type="NCBI Taxonomy" id="10116"/>
    <lineage>
        <taxon>Eukaryota</taxon>
        <taxon>Metazoa</taxon>
        <taxon>Chordata</taxon>
        <taxon>Craniata</taxon>
        <taxon>Vertebrata</taxon>
        <taxon>Euteleostomi</taxon>
        <taxon>Mammalia</taxon>
        <taxon>Eutheria</taxon>
        <taxon>Euarchontoglires</taxon>
        <taxon>Glires</taxon>
        <taxon>Rodentia</taxon>
        <taxon>Myomorpha</taxon>
        <taxon>Muroidea</taxon>
        <taxon>Muridae</taxon>
        <taxon>Murinae</taxon>
        <taxon>Rattus</taxon>
    </lineage>
</organism>
<accession>O35789</accession>
<accession>A0A0H2UHF1</accession>
<sequence>MPKRRDILAIVLIVLPWTLLITVWHQSSLAPLLAVHKDEGSDPRHEAPPGADPREYCMSDRDIVEVVRTEYVYTRPPPWSDTLPTIHVVTPTYSRPVQKAELTRMANTLLHVPNLHWLVVEDAPRRTPLTARLLRDTGLNYTHLHVETPRNYKLRGDARDPRIPRGTMQRNLALRWLRETFPRNSTQPGVVYFADDDNTYSLELFEEMRSTRRVSVWPVAFVGGLRYEAPRVNGAGKVVGWKTVFDPHRPFAIDMAGFAVNLRLILQRSQAYFKLRGVKGGYQESSLLRELVTLNDLEPKAANCTKILVWHTRTEKPVLVNEGKKGFTDPSVEI</sequence>
<dbReference type="EC" id="2.4.1.135" evidence="4"/>
<dbReference type="EMBL" id="D88035">
    <property type="protein sequence ID" value="BAA20551.1"/>
    <property type="status" value="ALT_INIT"/>
    <property type="molecule type" value="mRNA"/>
</dbReference>
<dbReference type="EMBL" id="AABR07069533">
    <property type="status" value="NOT_ANNOTATED_CDS"/>
    <property type="molecule type" value="Genomic_DNA"/>
</dbReference>
<dbReference type="EMBL" id="CH474007">
    <property type="protein sequence ID" value="EDL83354.1"/>
    <property type="molecule type" value="Genomic_DNA"/>
</dbReference>
<dbReference type="EMBL" id="CH474007">
    <property type="protein sequence ID" value="EDL83353.1"/>
    <property type="molecule type" value="Genomic_DNA"/>
</dbReference>
<dbReference type="EMBL" id="CH474007">
    <property type="protein sequence ID" value="EDL83351.1"/>
    <property type="molecule type" value="Genomic_DNA"/>
</dbReference>
<dbReference type="RefSeq" id="NP_446455.1">
    <molecule id="O35789-2"/>
    <property type="nucleotide sequence ID" value="NM_054003.1"/>
</dbReference>
<dbReference type="RefSeq" id="XP_006242795.1">
    <property type="nucleotide sequence ID" value="XM_006242733.3"/>
</dbReference>
<dbReference type="RefSeq" id="XP_006242796.1">
    <molecule id="O35789-1"/>
    <property type="nucleotide sequence ID" value="XM_006242734.5"/>
</dbReference>
<dbReference type="RefSeq" id="XP_038936638.1">
    <molecule id="O35789-1"/>
    <property type="nucleotide sequence ID" value="XM_039080710.2"/>
</dbReference>
<dbReference type="RefSeq" id="XP_038936641.1">
    <molecule id="O35789-1"/>
    <property type="nucleotide sequence ID" value="XM_039080713.2"/>
</dbReference>
<dbReference type="RefSeq" id="XP_063120855.1">
    <molecule id="O35789-2"/>
    <property type="nucleotide sequence ID" value="XM_063264785.1"/>
</dbReference>
<dbReference type="SMR" id="O35789"/>
<dbReference type="FunCoup" id="O35789">
    <property type="interactions" value="770"/>
</dbReference>
<dbReference type="STRING" id="10116.ENSRNOP00000009825"/>
<dbReference type="CAZy" id="GT43">
    <property type="family name" value="Glycosyltransferase Family 43"/>
</dbReference>
<dbReference type="GlyCosmos" id="O35789">
    <property type="glycosylation" value="3 sites, No reported glycans"/>
</dbReference>
<dbReference type="GlyGen" id="O35789">
    <property type="glycosylation" value="3 sites"/>
</dbReference>
<dbReference type="iPTMnet" id="O35789"/>
<dbReference type="PhosphoSitePlus" id="O35789"/>
<dbReference type="PaxDb" id="10116-ENSRNOP00000009825"/>
<dbReference type="Ensembl" id="ENSRNOT00000009825.6">
    <molecule id="O35789-2"/>
    <property type="protein sequence ID" value="ENSRNOP00000009825.5"/>
    <property type="gene ID" value="ENSRNOG00000007142.8"/>
</dbReference>
<dbReference type="GeneID" id="117108"/>
<dbReference type="KEGG" id="rno:117108"/>
<dbReference type="UCSC" id="RGD:70880">
    <molecule id="O35789-1"/>
    <property type="organism name" value="rat"/>
</dbReference>
<dbReference type="AGR" id="RGD:70880"/>
<dbReference type="CTD" id="27087"/>
<dbReference type="RGD" id="70880">
    <property type="gene designation" value="B3gat1"/>
</dbReference>
<dbReference type="VEuPathDB" id="HostDB:ENSRNOG00000007142"/>
<dbReference type="eggNOG" id="KOG1476">
    <property type="taxonomic scope" value="Eukaryota"/>
</dbReference>
<dbReference type="GeneTree" id="ENSGT00940000157165"/>
<dbReference type="HOGENOM" id="CLU_045177_1_0_1"/>
<dbReference type="InParanoid" id="O35789"/>
<dbReference type="OMA" id="DSREYCM"/>
<dbReference type="OrthoDB" id="21557at9989"/>
<dbReference type="TreeFam" id="TF313522"/>
<dbReference type="Reactome" id="R-RNO-1971475">
    <property type="pathway name" value="A tetrasaccharide linker sequence is required for GAG synthesis"/>
</dbReference>
<dbReference type="UniPathway" id="UPA00378"/>
<dbReference type="PRO" id="PR:O35789"/>
<dbReference type="Proteomes" id="UP000002494">
    <property type="component" value="Chromosome 8"/>
</dbReference>
<dbReference type="Proteomes" id="UP000234681">
    <property type="component" value="Chromosome 8"/>
</dbReference>
<dbReference type="Bgee" id="ENSRNOG00000007142">
    <property type="expression patterns" value="Expressed in frontal cortex and 5 other cell types or tissues"/>
</dbReference>
<dbReference type="GO" id="GO:0005789">
    <property type="term" value="C:endoplasmic reticulum membrane"/>
    <property type="evidence" value="ECO:0000314"/>
    <property type="project" value="UniProtKB"/>
</dbReference>
<dbReference type="GO" id="GO:0005576">
    <property type="term" value="C:extracellular region"/>
    <property type="evidence" value="ECO:0007669"/>
    <property type="project" value="UniProtKB-SubCell"/>
</dbReference>
<dbReference type="GO" id="GO:0005796">
    <property type="term" value="C:Golgi lumen"/>
    <property type="evidence" value="ECO:0000304"/>
    <property type="project" value="RGD"/>
</dbReference>
<dbReference type="GO" id="GO:0000139">
    <property type="term" value="C:Golgi membrane"/>
    <property type="evidence" value="ECO:0000314"/>
    <property type="project" value="UniProtKB"/>
</dbReference>
<dbReference type="GO" id="GO:0015018">
    <property type="term" value="F:galactosylgalactosylxylosylprotein 3-beta-glucuronosyltransferase activity"/>
    <property type="evidence" value="ECO:0000314"/>
    <property type="project" value="UniProtKB"/>
</dbReference>
<dbReference type="GO" id="GO:0046872">
    <property type="term" value="F:metal ion binding"/>
    <property type="evidence" value="ECO:0007669"/>
    <property type="project" value="UniProtKB-KW"/>
</dbReference>
<dbReference type="GO" id="GO:0005975">
    <property type="term" value="P:carbohydrate metabolic process"/>
    <property type="evidence" value="ECO:0000318"/>
    <property type="project" value="GO_Central"/>
</dbReference>
<dbReference type="GO" id="GO:0071456">
    <property type="term" value="P:cellular response to hypoxia"/>
    <property type="evidence" value="ECO:0000270"/>
    <property type="project" value="RGD"/>
</dbReference>
<dbReference type="GO" id="GO:0050650">
    <property type="term" value="P:chondroitin sulfate proteoglycan biosynthetic process"/>
    <property type="evidence" value="ECO:0000318"/>
    <property type="project" value="GO_Central"/>
</dbReference>
<dbReference type="GO" id="GO:0006024">
    <property type="term" value="P:glycosaminoglycan biosynthetic process"/>
    <property type="evidence" value="ECO:0000266"/>
    <property type="project" value="RGD"/>
</dbReference>
<dbReference type="GO" id="GO:0006486">
    <property type="term" value="P:protein glycosylation"/>
    <property type="evidence" value="ECO:0007669"/>
    <property type="project" value="UniProtKB-UniPathway"/>
</dbReference>
<dbReference type="GO" id="GO:0008542">
    <property type="term" value="P:visual learning"/>
    <property type="evidence" value="ECO:0000266"/>
    <property type="project" value="RGD"/>
</dbReference>
<dbReference type="CDD" id="cd00218">
    <property type="entry name" value="GlcAT-I"/>
    <property type="match status" value="1"/>
</dbReference>
<dbReference type="FunFam" id="3.90.550.10:FF:000010">
    <property type="entry name" value="Galactosylgalactosylxylosylprotein 3-beta-glucuronosyltransferase"/>
    <property type="match status" value="1"/>
</dbReference>
<dbReference type="Gene3D" id="3.90.550.10">
    <property type="entry name" value="Spore Coat Polysaccharide Biosynthesis Protein SpsA, Chain A"/>
    <property type="match status" value="1"/>
</dbReference>
<dbReference type="InterPro" id="IPR005027">
    <property type="entry name" value="Glyco_trans_43"/>
</dbReference>
<dbReference type="InterPro" id="IPR029044">
    <property type="entry name" value="Nucleotide-diphossugar_trans"/>
</dbReference>
<dbReference type="PANTHER" id="PTHR10896:SF21">
    <property type="entry name" value="GALACTOSYLGALACTOSYLXYLOSYLPROTEIN 3-BETA-GLUCURONOSYLTRANSFERASE 1"/>
    <property type="match status" value="1"/>
</dbReference>
<dbReference type="PANTHER" id="PTHR10896">
    <property type="entry name" value="GALACTOSYLGALACTOSYLXYLOSYLPROTEIN 3-BETA-GLUCURONOSYLTRANSFERASE BETA-1,3-GLUCURONYLTRANSFERASE"/>
    <property type="match status" value="1"/>
</dbReference>
<dbReference type="Pfam" id="PF03360">
    <property type="entry name" value="Glyco_transf_43"/>
    <property type="match status" value="1"/>
</dbReference>
<dbReference type="SUPFAM" id="SSF53448">
    <property type="entry name" value="Nucleotide-diphospho-sugar transferases"/>
    <property type="match status" value="1"/>
</dbReference>
<proteinExistence type="evidence at protein level"/>
<name>B3GA1_RAT</name>
<keyword id="KW-0025">Alternative splicing</keyword>
<keyword id="KW-0903">Direct protein sequencing</keyword>
<keyword id="KW-0256">Endoplasmic reticulum</keyword>
<keyword id="KW-0325">Glycoprotein</keyword>
<keyword id="KW-0333">Golgi apparatus</keyword>
<keyword id="KW-0464">Manganese</keyword>
<keyword id="KW-0472">Membrane</keyword>
<keyword id="KW-0479">Metal-binding</keyword>
<keyword id="KW-0597">Phosphoprotein</keyword>
<keyword id="KW-1185">Reference proteome</keyword>
<keyword id="KW-0964">Secreted</keyword>
<keyword id="KW-0735">Signal-anchor</keyword>
<keyword id="KW-0808">Transferase</keyword>
<keyword id="KW-0812">Transmembrane</keyword>
<keyword id="KW-1133">Transmembrane helix</keyword>